<dbReference type="EMBL" id="L29342">
    <property type="protein sequence ID" value="AAA31067.1"/>
    <property type="molecule type" value="mRNA"/>
</dbReference>
<dbReference type="EMBL" id="AF227686">
    <property type="protein sequence ID" value="AAF33402.1"/>
    <property type="molecule type" value="Genomic_DNA"/>
</dbReference>
<dbReference type="EMBL" id="AF227685">
    <property type="protein sequence ID" value="AAF33402.1"/>
    <property type="status" value="JOINED"/>
    <property type="molecule type" value="Genomic_DNA"/>
</dbReference>
<dbReference type="RefSeq" id="NP_999438.1">
    <property type="nucleotide sequence ID" value="NM_214273.1"/>
</dbReference>
<dbReference type="SMR" id="P49922"/>
<dbReference type="FunCoup" id="P49922">
    <property type="interactions" value="152"/>
</dbReference>
<dbReference type="STRING" id="9823.ENSSSCP00000059390"/>
<dbReference type="GlyCosmos" id="P49922">
    <property type="glycosylation" value="2 sites, No reported glycans"/>
</dbReference>
<dbReference type="GlyGen" id="P49922">
    <property type="glycosylation" value="2 sites"/>
</dbReference>
<dbReference type="PaxDb" id="9823-ENSSSCP00000009521"/>
<dbReference type="Ensembl" id="ENSSSCT00070017085.1">
    <property type="protein sequence ID" value="ENSSSCP00070014138.1"/>
    <property type="gene ID" value="ENSSSCG00070008818.1"/>
</dbReference>
<dbReference type="GeneID" id="397515"/>
<dbReference type="KEGG" id="ssc:397515"/>
<dbReference type="CTD" id="2798"/>
<dbReference type="eggNOG" id="KOG3656">
    <property type="taxonomic scope" value="Eukaryota"/>
</dbReference>
<dbReference type="HOGENOM" id="CLU_009579_15_2_1"/>
<dbReference type="InParanoid" id="P49922"/>
<dbReference type="OrthoDB" id="6022667at2759"/>
<dbReference type="TreeFam" id="TF106499"/>
<dbReference type="Reactome" id="R-SSC-375281">
    <property type="pathway name" value="Hormone ligand-binding receptors"/>
</dbReference>
<dbReference type="Reactome" id="R-SSC-416476">
    <property type="pathway name" value="G alpha (q) signalling events"/>
</dbReference>
<dbReference type="Proteomes" id="UP000008227">
    <property type="component" value="Unplaced"/>
</dbReference>
<dbReference type="Proteomes" id="UP000314985">
    <property type="component" value="Chromosome 8"/>
</dbReference>
<dbReference type="Proteomes" id="UP000694570">
    <property type="component" value="Unplaced"/>
</dbReference>
<dbReference type="Proteomes" id="UP000694571">
    <property type="component" value="Unplaced"/>
</dbReference>
<dbReference type="Proteomes" id="UP000694720">
    <property type="component" value="Unplaced"/>
</dbReference>
<dbReference type="Proteomes" id="UP000694722">
    <property type="component" value="Unplaced"/>
</dbReference>
<dbReference type="Proteomes" id="UP000694723">
    <property type="component" value="Unplaced"/>
</dbReference>
<dbReference type="Proteomes" id="UP000694724">
    <property type="component" value="Unplaced"/>
</dbReference>
<dbReference type="Proteomes" id="UP000694725">
    <property type="component" value="Unplaced"/>
</dbReference>
<dbReference type="Proteomes" id="UP000694726">
    <property type="component" value="Unplaced"/>
</dbReference>
<dbReference type="Proteomes" id="UP000694727">
    <property type="component" value="Unplaced"/>
</dbReference>
<dbReference type="Proteomes" id="UP000694728">
    <property type="component" value="Unplaced"/>
</dbReference>
<dbReference type="GO" id="GO:0005886">
    <property type="term" value="C:plasma membrane"/>
    <property type="evidence" value="ECO:0000318"/>
    <property type="project" value="GO_Central"/>
</dbReference>
<dbReference type="GO" id="GO:0004968">
    <property type="term" value="F:gonadotropin-releasing hormone receptor activity"/>
    <property type="evidence" value="ECO:0000318"/>
    <property type="project" value="GO_Central"/>
</dbReference>
<dbReference type="GO" id="GO:0032870">
    <property type="term" value="P:cellular response to hormone stimulus"/>
    <property type="evidence" value="ECO:0000318"/>
    <property type="project" value="GO_Central"/>
</dbReference>
<dbReference type="GO" id="GO:0007186">
    <property type="term" value="P:G protein-coupled receptor signaling pathway"/>
    <property type="evidence" value="ECO:0000318"/>
    <property type="project" value="GO_Central"/>
</dbReference>
<dbReference type="FunFam" id="1.20.1070.10:FF:000203">
    <property type="entry name" value="gonadotropin-releasing hormone receptor"/>
    <property type="match status" value="1"/>
</dbReference>
<dbReference type="Gene3D" id="1.20.1070.10">
    <property type="entry name" value="Rhodopsin 7-helix transmembrane proteins"/>
    <property type="match status" value="1"/>
</dbReference>
<dbReference type="InterPro" id="IPR000276">
    <property type="entry name" value="GPCR_Rhodpsn"/>
</dbReference>
<dbReference type="InterPro" id="IPR017452">
    <property type="entry name" value="GPCR_Rhodpsn_7TM"/>
</dbReference>
<dbReference type="InterPro" id="IPR001658">
    <property type="entry name" value="GphnRH_fam_rcpt"/>
</dbReference>
<dbReference type="PANTHER" id="PTHR24241:SF22">
    <property type="entry name" value="GONADOTROPIN-RELEASING HORMONE RECEPTOR"/>
    <property type="match status" value="1"/>
</dbReference>
<dbReference type="PANTHER" id="PTHR24241">
    <property type="entry name" value="NEUROPEPTIDE RECEPTOR-RELATED G-PROTEIN COUPLED RECEPTOR"/>
    <property type="match status" value="1"/>
</dbReference>
<dbReference type="Pfam" id="PF00001">
    <property type="entry name" value="7tm_1"/>
    <property type="match status" value="1"/>
</dbReference>
<dbReference type="PRINTS" id="PR00529">
    <property type="entry name" value="GNADOTRPHINR"/>
</dbReference>
<dbReference type="PRINTS" id="PR00237">
    <property type="entry name" value="GPCRRHODOPSN"/>
</dbReference>
<dbReference type="SUPFAM" id="SSF81321">
    <property type="entry name" value="Family A G protein-coupled receptor-like"/>
    <property type="match status" value="1"/>
</dbReference>
<dbReference type="PROSITE" id="PS00237">
    <property type="entry name" value="G_PROTEIN_RECEP_F1_1"/>
    <property type="match status" value="1"/>
</dbReference>
<dbReference type="PROSITE" id="PS50262">
    <property type="entry name" value="G_PROTEIN_RECEP_F1_2"/>
    <property type="match status" value="1"/>
</dbReference>
<gene>
    <name type="primary">GNRHR</name>
</gene>
<organism>
    <name type="scientific">Sus scrofa</name>
    <name type="common">Pig</name>
    <dbReference type="NCBI Taxonomy" id="9823"/>
    <lineage>
        <taxon>Eukaryota</taxon>
        <taxon>Metazoa</taxon>
        <taxon>Chordata</taxon>
        <taxon>Craniata</taxon>
        <taxon>Vertebrata</taxon>
        <taxon>Euteleostomi</taxon>
        <taxon>Mammalia</taxon>
        <taxon>Eutheria</taxon>
        <taxon>Laurasiatheria</taxon>
        <taxon>Artiodactyla</taxon>
        <taxon>Suina</taxon>
        <taxon>Suidae</taxon>
        <taxon>Sus</taxon>
    </lineage>
</organism>
<accession>P49922</accession>
<accession>Q9N142</accession>
<proteinExistence type="evidence at transcript level"/>
<protein>
    <recommendedName>
        <fullName>Gonadotropin-releasing hormone receptor</fullName>
        <shortName>GnRH receptor</shortName>
        <shortName>GnRH-R</shortName>
    </recommendedName>
    <alternativeName>
        <fullName>Luteinizing hormone-releasing hormone receptor</fullName>
        <shortName>LHRH</shortName>
    </alternativeName>
</protein>
<comment type="function">
    <text>Receptor for gonadotropin releasing hormone (GnRH) that mediates the action of GnRH to stimulate the secretion of the gonadotropic hormones luteinizing hormone (LH) and follicle-stimulating hormone (FSH). This receptor mediates its action by association with G-proteins that activate a phosphatidylinositol-calcium second messenger system.</text>
</comment>
<comment type="subcellular location">
    <subcellularLocation>
        <location>Cell membrane</location>
        <topology>Multi-pass membrane protein</topology>
    </subcellularLocation>
</comment>
<comment type="tissue specificity">
    <text>Pituitary gland.</text>
</comment>
<comment type="similarity">
    <text evidence="2">Belongs to the G-protein coupled receptor 1 family.</text>
</comment>
<feature type="chain" id="PRO_0000069490" description="Gonadotropin-releasing hormone receptor">
    <location>
        <begin position="1"/>
        <end position="328"/>
    </location>
</feature>
<feature type="topological domain" description="Extracellular" evidence="1">
    <location>
        <begin position="1"/>
        <end position="38"/>
    </location>
</feature>
<feature type="transmembrane region" description="Helical; Name=1" evidence="1">
    <location>
        <begin position="39"/>
        <end position="58"/>
    </location>
</feature>
<feature type="topological domain" description="Cytoplasmic" evidence="1">
    <location>
        <begin position="59"/>
        <end position="77"/>
    </location>
</feature>
<feature type="transmembrane region" description="Helical; Name=2" evidence="1">
    <location>
        <begin position="78"/>
        <end position="97"/>
    </location>
</feature>
<feature type="topological domain" description="Extracellular" evidence="1">
    <location>
        <begin position="98"/>
        <end position="115"/>
    </location>
</feature>
<feature type="transmembrane region" description="Helical; Name=3" evidence="1">
    <location>
        <begin position="116"/>
        <end position="137"/>
    </location>
</feature>
<feature type="topological domain" description="Cytoplasmic" evidence="1">
    <location>
        <begin position="138"/>
        <end position="164"/>
    </location>
</feature>
<feature type="transmembrane region" description="Helical; Name=4" evidence="1">
    <location>
        <begin position="165"/>
        <end position="184"/>
    </location>
</feature>
<feature type="topological domain" description="Extracellular" evidence="1">
    <location>
        <begin position="185"/>
        <end position="212"/>
    </location>
</feature>
<feature type="transmembrane region" description="Helical; Name=5" evidence="1">
    <location>
        <begin position="213"/>
        <end position="232"/>
    </location>
</feature>
<feature type="topological domain" description="Cytoplasmic" evidence="1">
    <location>
        <begin position="233"/>
        <end position="281"/>
    </location>
</feature>
<feature type="transmembrane region" description="Helical; Name=6" evidence="1">
    <location>
        <begin position="282"/>
        <end position="300"/>
    </location>
</feature>
<feature type="topological domain" description="Extracellular" evidence="1">
    <location>
        <begin position="301"/>
        <end position="306"/>
    </location>
</feature>
<feature type="transmembrane region" description="Helical; Name=7" evidence="1">
    <location>
        <begin position="307"/>
        <end position="326"/>
    </location>
</feature>
<feature type="topological domain" description="Cytoplasmic" evidence="1">
    <location>
        <begin position="327"/>
        <end position="328"/>
    </location>
</feature>
<feature type="glycosylation site" description="N-linked (GlcNAc...) asparagine" evidence="1">
    <location>
        <position position="18"/>
    </location>
</feature>
<feature type="glycosylation site" description="N-linked (GlcNAc...) asparagine" evidence="1">
    <location>
        <position position="102"/>
    </location>
</feature>
<feature type="disulfide bond" evidence="2">
    <location>
        <begin position="114"/>
        <end position="196"/>
    </location>
</feature>
<feature type="sequence conflict" description="In Ref. 1; AAA31067." evidence="3" ref="1">
    <original>GK</original>
    <variation>PN</variation>
    <location>
        <begin position="35"/>
        <end position="36"/>
    </location>
</feature>
<feature type="sequence conflict" description="In Ref. 1; AAA31067." evidence="3" ref="1">
    <original>N</original>
    <variation>D</variation>
    <location>
        <position position="212"/>
    </location>
</feature>
<feature type="sequence conflict" description="In Ref. 1; AAA31067." evidence="3" ref="1">
    <original>Y</original>
    <variation>L</variation>
    <location>
        <position position="284"/>
    </location>
</feature>
<evidence type="ECO:0000255" key="1"/>
<evidence type="ECO:0000255" key="2">
    <source>
        <dbReference type="PROSITE-ProRule" id="PRU00521"/>
    </source>
</evidence>
<evidence type="ECO:0000305" key="3"/>
<sequence length="328" mass="37747">MANSASPEQNQNHCSAINSSILLTQGNLPTLTLSGKIRVTVTFFLFLLSTAFNASFLLKLQKWTQRKEKGKKLSRMKVLLKHLTLANLLETLIVMPLDGMWNITVQWYAGEFLCKVLSYLKLFSMYAPAFMMVVISLDRSLAITRPLAVKSNSRLGRFMIGLAWLLSSIFAGPQLYIFRMIHLADSSGQTEGFSQCVTHGSFPQWWHQAFYNFFTFSCLFIIPLLIMLICNAKIMFTLTRVLQQDPHNLQLNQSKNNIPRARLRTLKMTVAFAASFIVCWTPYYVLGIWYWFDPEMVNRVSDPVNHFFFLFAFLNPCFDPLIYGYFSL</sequence>
<name>GNRHR_PIG</name>
<reference key="1">
    <citation type="journal article" date="1994" name="J. Anim. Sci.">
        <title>Rapid communication: nucleotide sequence of luteinizing hormone-releasing hormone (LHRH) receptor cDNA in the pig pituitary.</title>
        <authorList>
            <person name="Weesner G.D."/>
            <person name="Matteri R.L."/>
        </authorList>
    </citation>
    <scope>NUCLEOTIDE SEQUENCE [MRNA]</scope>
    <source>
        <tissue>Pituitary</tissue>
    </source>
</reference>
<reference key="2">
    <citation type="journal article" date="2001" name="Genome">
        <title>The porcine gonadotropin-releasing hormone receptor gene (GNRHR): genomic organization, polymorphisms, and association with the number of corpora lutea.</title>
        <authorList>
            <person name="Jiang Z."/>
            <person name="Gibson J.P."/>
            <person name="Archibald A.L."/>
            <person name="Haley C.S."/>
        </authorList>
    </citation>
    <scope>NUCLEOTIDE SEQUENCE [GENOMIC DNA]</scope>
</reference>
<keyword id="KW-1003">Cell membrane</keyword>
<keyword id="KW-1015">Disulfide bond</keyword>
<keyword id="KW-0297">G-protein coupled receptor</keyword>
<keyword id="KW-0325">Glycoprotein</keyword>
<keyword id="KW-0472">Membrane</keyword>
<keyword id="KW-0675">Receptor</keyword>
<keyword id="KW-1185">Reference proteome</keyword>
<keyword id="KW-0807">Transducer</keyword>
<keyword id="KW-0812">Transmembrane</keyword>
<keyword id="KW-1133">Transmembrane helix</keyword>